<protein>
    <recommendedName>
        <fullName evidence="1">DNA-directed RNA polymerase subunit Rpo10</fullName>
        <ecNumber evidence="1">2.7.7.6</ecNumber>
    </recommendedName>
    <alternativeName>
        <fullName evidence="1">DNA-directed RNA polymerase subunit N</fullName>
    </alternativeName>
</protein>
<feature type="chain" id="PRO_1000100991" description="DNA-directed RNA polymerase subunit Rpo10">
    <location>
        <begin position="1"/>
        <end position="65"/>
    </location>
</feature>
<feature type="binding site" evidence="1">
    <location>
        <position position="7"/>
    </location>
    <ligand>
        <name>Zn(2+)</name>
        <dbReference type="ChEBI" id="CHEBI:29105"/>
    </ligand>
</feature>
<feature type="binding site" evidence="1">
    <location>
        <position position="10"/>
    </location>
    <ligand>
        <name>Zn(2+)</name>
        <dbReference type="ChEBI" id="CHEBI:29105"/>
    </ligand>
</feature>
<feature type="binding site" evidence="1">
    <location>
        <position position="44"/>
    </location>
    <ligand>
        <name>Zn(2+)</name>
        <dbReference type="ChEBI" id="CHEBI:29105"/>
    </ligand>
</feature>
<feature type="binding site" evidence="1">
    <location>
        <position position="45"/>
    </location>
    <ligand>
        <name>Zn(2+)</name>
        <dbReference type="ChEBI" id="CHEBI:29105"/>
    </ligand>
</feature>
<accession>B6YSQ7</accession>
<comment type="function">
    <text evidence="1">DNA-dependent RNA polymerase (RNAP) catalyzes the transcription of DNA into RNA using the four ribonucleoside triphosphates as substrates.</text>
</comment>
<comment type="catalytic activity">
    <reaction evidence="1">
        <text>RNA(n) + a ribonucleoside 5'-triphosphate = RNA(n+1) + diphosphate</text>
        <dbReference type="Rhea" id="RHEA:21248"/>
        <dbReference type="Rhea" id="RHEA-COMP:14527"/>
        <dbReference type="Rhea" id="RHEA-COMP:17342"/>
        <dbReference type="ChEBI" id="CHEBI:33019"/>
        <dbReference type="ChEBI" id="CHEBI:61557"/>
        <dbReference type="ChEBI" id="CHEBI:140395"/>
        <dbReference type="EC" id="2.7.7.6"/>
    </reaction>
</comment>
<comment type="cofactor">
    <cofactor evidence="1">
        <name>Zn(2+)</name>
        <dbReference type="ChEBI" id="CHEBI:29105"/>
    </cofactor>
    <text evidence="1">Binds 1 zinc ion.</text>
</comment>
<comment type="subunit">
    <text evidence="1">Part of the RNA polymerase complex.</text>
</comment>
<comment type="subcellular location">
    <subcellularLocation>
        <location evidence="1">Cytoplasm</location>
    </subcellularLocation>
</comment>
<comment type="similarity">
    <text evidence="1">Belongs to the archaeal Rpo10/eukaryotic RPB10 RNA polymerase subunit family.</text>
</comment>
<evidence type="ECO:0000255" key="1">
    <source>
        <dbReference type="HAMAP-Rule" id="MF_00250"/>
    </source>
</evidence>
<sequence length="65" mass="7648">MIVPVRCFTCGKVIGDKYYEFKARVEKGEDPEKVLDDLGVERYCCRRTLLSHVELIDQVMVYKVY</sequence>
<name>RPO10_THEON</name>
<dbReference type="EC" id="2.7.7.6" evidence="1"/>
<dbReference type="EMBL" id="CP000855">
    <property type="protein sequence ID" value="ACJ15594.1"/>
    <property type="molecule type" value="Genomic_DNA"/>
</dbReference>
<dbReference type="RefSeq" id="WP_012571067.1">
    <property type="nucleotide sequence ID" value="NC_011529.1"/>
</dbReference>
<dbReference type="SMR" id="B6YSQ7"/>
<dbReference type="STRING" id="523850.TON_0109"/>
<dbReference type="GeneID" id="7017758"/>
<dbReference type="KEGG" id="ton:TON_0109"/>
<dbReference type="PATRIC" id="fig|523850.10.peg.109"/>
<dbReference type="eggNOG" id="arCOG04244">
    <property type="taxonomic scope" value="Archaea"/>
</dbReference>
<dbReference type="HOGENOM" id="CLU_143122_1_1_2"/>
<dbReference type="OrthoDB" id="371754at2157"/>
<dbReference type="Proteomes" id="UP000002727">
    <property type="component" value="Chromosome"/>
</dbReference>
<dbReference type="GO" id="GO:0005737">
    <property type="term" value="C:cytoplasm"/>
    <property type="evidence" value="ECO:0007669"/>
    <property type="project" value="UniProtKB-SubCell"/>
</dbReference>
<dbReference type="GO" id="GO:0000428">
    <property type="term" value="C:DNA-directed RNA polymerase complex"/>
    <property type="evidence" value="ECO:0007669"/>
    <property type="project" value="UniProtKB-KW"/>
</dbReference>
<dbReference type="GO" id="GO:0003677">
    <property type="term" value="F:DNA binding"/>
    <property type="evidence" value="ECO:0007669"/>
    <property type="project" value="InterPro"/>
</dbReference>
<dbReference type="GO" id="GO:0003899">
    <property type="term" value="F:DNA-directed RNA polymerase activity"/>
    <property type="evidence" value="ECO:0007669"/>
    <property type="project" value="UniProtKB-UniRule"/>
</dbReference>
<dbReference type="GO" id="GO:0008270">
    <property type="term" value="F:zinc ion binding"/>
    <property type="evidence" value="ECO:0007669"/>
    <property type="project" value="UniProtKB-UniRule"/>
</dbReference>
<dbReference type="GO" id="GO:0006351">
    <property type="term" value="P:DNA-templated transcription"/>
    <property type="evidence" value="ECO:0007669"/>
    <property type="project" value="UniProtKB-UniRule"/>
</dbReference>
<dbReference type="FunFam" id="1.10.10.60:FF:000335">
    <property type="entry name" value="DNA-directed RNA polymerase subunit N, putative"/>
    <property type="match status" value="1"/>
</dbReference>
<dbReference type="Gene3D" id="1.10.10.60">
    <property type="entry name" value="Homeodomain-like"/>
    <property type="match status" value="1"/>
</dbReference>
<dbReference type="HAMAP" id="MF_00250">
    <property type="entry name" value="RNApol_arch_Rpo10"/>
    <property type="match status" value="1"/>
</dbReference>
<dbReference type="InterPro" id="IPR023580">
    <property type="entry name" value="RNA_pol_su_RPB10"/>
</dbReference>
<dbReference type="InterPro" id="IPR020789">
    <property type="entry name" value="RNA_pol_suN_Zn-BS"/>
</dbReference>
<dbReference type="InterPro" id="IPR000268">
    <property type="entry name" value="RPABC5/Rpb10"/>
</dbReference>
<dbReference type="NCBIfam" id="NF003089">
    <property type="entry name" value="PRK04016.1"/>
    <property type="match status" value="1"/>
</dbReference>
<dbReference type="PANTHER" id="PTHR23431:SF3">
    <property type="entry name" value="DNA-DIRECTED RNA POLYMERASES I, II, AND III SUBUNIT RPABC5"/>
    <property type="match status" value="1"/>
</dbReference>
<dbReference type="PANTHER" id="PTHR23431">
    <property type="entry name" value="DNA-DIRECTED RNA POLYMERASES I, II, AND III SUBUNIT RPABC5 FAMILY MEMBER"/>
    <property type="match status" value="1"/>
</dbReference>
<dbReference type="Pfam" id="PF01194">
    <property type="entry name" value="RNA_pol_N"/>
    <property type="match status" value="1"/>
</dbReference>
<dbReference type="PIRSF" id="PIRSF005653">
    <property type="entry name" value="RNA_pol_N/8_sub"/>
    <property type="match status" value="1"/>
</dbReference>
<dbReference type="SUPFAM" id="SSF46924">
    <property type="entry name" value="RNA polymerase subunit RPB10"/>
    <property type="match status" value="1"/>
</dbReference>
<dbReference type="PROSITE" id="PS01112">
    <property type="entry name" value="RNA_POL_N_8KD"/>
    <property type="match status" value="1"/>
</dbReference>
<reference key="1">
    <citation type="journal article" date="2008" name="J. Bacteriol.">
        <title>The complete genome sequence of Thermococcus onnurineus NA1 reveals a mixed heterotrophic and carboxydotrophic metabolism.</title>
        <authorList>
            <person name="Lee H.S."/>
            <person name="Kang S.G."/>
            <person name="Bae S.S."/>
            <person name="Lim J.K."/>
            <person name="Cho Y."/>
            <person name="Kim Y.J."/>
            <person name="Jeon J.H."/>
            <person name="Cha S.-S."/>
            <person name="Kwon K.K."/>
            <person name="Kim H.-T."/>
            <person name="Park C.-J."/>
            <person name="Lee H.-W."/>
            <person name="Kim S.I."/>
            <person name="Chun J."/>
            <person name="Colwell R.R."/>
            <person name="Kim S.-J."/>
            <person name="Lee J.-H."/>
        </authorList>
    </citation>
    <scope>NUCLEOTIDE SEQUENCE [LARGE SCALE GENOMIC DNA]</scope>
    <source>
        <strain>NA1</strain>
    </source>
</reference>
<organism>
    <name type="scientific">Thermococcus onnurineus (strain NA1)</name>
    <dbReference type="NCBI Taxonomy" id="523850"/>
    <lineage>
        <taxon>Archaea</taxon>
        <taxon>Methanobacteriati</taxon>
        <taxon>Methanobacteriota</taxon>
        <taxon>Thermococci</taxon>
        <taxon>Thermococcales</taxon>
        <taxon>Thermococcaceae</taxon>
        <taxon>Thermococcus</taxon>
    </lineage>
</organism>
<gene>
    <name evidence="1" type="primary">rpo10</name>
    <name evidence="1" type="synonym">rpoN</name>
    <name type="ordered locus">TON_0109</name>
</gene>
<keyword id="KW-0963">Cytoplasm</keyword>
<keyword id="KW-0240">DNA-directed RNA polymerase</keyword>
<keyword id="KW-0479">Metal-binding</keyword>
<keyword id="KW-0548">Nucleotidyltransferase</keyword>
<keyword id="KW-0804">Transcription</keyword>
<keyword id="KW-0808">Transferase</keyword>
<keyword id="KW-0862">Zinc</keyword>
<proteinExistence type="inferred from homology"/>